<accession>A8AK28</accession>
<keyword id="KW-0547">Nucleotide-binding</keyword>
<keyword id="KW-1185">Reference proteome</keyword>
<reference key="1">
    <citation type="submission" date="2007-08" db="EMBL/GenBank/DDBJ databases">
        <authorList>
            <consortium name="The Citrobacter koseri Genome Sequencing Project"/>
            <person name="McClelland M."/>
            <person name="Sanderson E.K."/>
            <person name="Porwollik S."/>
            <person name="Spieth J."/>
            <person name="Clifton W.S."/>
            <person name="Latreille P."/>
            <person name="Courtney L."/>
            <person name="Wang C."/>
            <person name="Pepin K."/>
            <person name="Bhonagiri V."/>
            <person name="Nash W."/>
            <person name="Johnson M."/>
            <person name="Thiruvilangam P."/>
            <person name="Wilson R."/>
        </authorList>
    </citation>
    <scope>NUCLEOTIDE SEQUENCE [LARGE SCALE GENOMIC DNA]</scope>
    <source>
        <strain>ATCC BAA-895 / CDC 4225-83 / SGSC4696</strain>
    </source>
</reference>
<name>Y2735_CITK8</name>
<comment type="function">
    <text evidence="1">Nucleotide-binding protein.</text>
</comment>
<comment type="similarity">
    <text evidence="1">Belongs to the YajQ family.</text>
</comment>
<gene>
    <name type="ordered locus">CKO_02735</name>
</gene>
<feature type="chain" id="PRO_1000051724" description="Nucleotide-binding protein CKO_02735">
    <location>
        <begin position="1"/>
        <end position="163"/>
    </location>
</feature>
<proteinExistence type="inferred from homology"/>
<dbReference type="EMBL" id="CP000822">
    <property type="protein sequence ID" value="ABV13841.1"/>
    <property type="molecule type" value="Genomic_DNA"/>
</dbReference>
<dbReference type="RefSeq" id="WP_012133556.1">
    <property type="nucleotide sequence ID" value="NC_009792.1"/>
</dbReference>
<dbReference type="SMR" id="A8AK28"/>
<dbReference type="STRING" id="290338.CKO_02735"/>
<dbReference type="GeneID" id="45136589"/>
<dbReference type="KEGG" id="cko:CKO_02735"/>
<dbReference type="HOGENOM" id="CLU_099839_1_0_6"/>
<dbReference type="OrthoDB" id="9801447at2"/>
<dbReference type="Proteomes" id="UP000008148">
    <property type="component" value="Chromosome"/>
</dbReference>
<dbReference type="GO" id="GO:0005829">
    <property type="term" value="C:cytosol"/>
    <property type="evidence" value="ECO:0007669"/>
    <property type="project" value="TreeGrafter"/>
</dbReference>
<dbReference type="GO" id="GO:0000166">
    <property type="term" value="F:nucleotide binding"/>
    <property type="evidence" value="ECO:0007669"/>
    <property type="project" value="TreeGrafter"/>
</dbReference>
<dbReference type="CDD" id="cd11740">
    <property type="entry name" value="YajQ_like"/>
    <property type="match status" value="1"/>
</dbReference>
<dbReference type="FunFam" id="3.30.70.860:FF:000001">
    <property type="entry name" value="UPF0234 protein YajQ"/>
    <property type="match status" value="1"/>
</dbReference>
<dbReference type="FunFam" id="3.30.70.990:FF:000001">
    <property type="entry name" value="UPF0234 protein YajQ"/>
    <property type="match status" value="1"/>
</dbReference>
<dbReference type="Gene3D" id="3.30.70.860">
    <property type="match status" value="1"/>
</dbReference>
<dbReference type="Gene3D" id="3.30.70.990">
    <property type="entry name" value="YajQ-like, domain 2"/>
    <property type="match status" value="1"/>
</dbReference>
<dbReference type="HAMAP" id="MF_00632">
    <property type="entry name" value="YajQ"/>
    <property type="match status" value="1"/>
</dbReference>
<dbReference type="InterPro" id="IPR007551">
    <property type="entry name" value="DUF520"/>
</dbReference>
<dbReference type="InterPro" id="IPR035571">
    <property type="entry name" value="UPF0234-like_C"/>
</dbReference>
<dbReference type="InterPro" id="IPR035570">
    <property type="entry name" value="UPF0234_N"/>
</dbReference>
<dbReference type="InterPro" id="IPR036183">
    <property type="entry name" value="YajQ-like_sf"/>
</dbReference>
<dbReference type="NCBIfam" id="NF003819">
    <property type="entry name" value="PRK05412.1"/>
    <property type="match status" value="1"/>
</dbReference>
<dbReference type="PANTHER" id="PTHR30476">
    <property type="entry name" value="UPF0234 PROTEIN YAJQ"/>
    <property type="match status" value="1"/>
</dbReference>
<dbReference type="PANTHER" id="PTHR30476:SF0">
    <property type="entry name" value="UPF0234 PROTEIN YAJQ"/>
    <property type="match status" value="1"/>
</dbReference>
<dbReference type="Pfam" id="PF04461">
    <property type="entry name" value="DUF520"/>
    <property type="match status" value="1"/>
</dbReference>
<dbReference type="SUPFAM" id="SSF89963">
    <property type="entry name" value="YajQ-like"/>
    <property type="match status" value="2"/>
</dbReference>
<evidence type="ECO:0000255" key="1">
    <source>
        <dbReference type="HAMAP-Rule" id="MF_00632"/>
    </source>
</evidence>
<protein>
    <recommendedName>
        <fullName evidence="1">Nucleotide-binding protein CKO_02735</fullName>
    </recommendedName>
</protein>
<sequence>MPSFDIVSEVDLQEARNAVDNATREVESRFDFRGVEATFELNDANKTIKVLSESDFQVNQLLDILRAKLLKRGIEGSSLDVPEAFVHSGKTWFVEAKLKQGIESAVQKKIVKLIKDSKLKVQAQIQGEEIRVTGKSRDDLQSVMALVRGGDLGQPFQFKNFRD</sequence>
<organism>
    <name type="scientific">Citrobacter koseri (strain ATCC BAA-895 / CDC 4225-83 / SGSC4696)</name>
    <dbReference type="NCBI Taxonomy" id="290338"/>
    <lineage>
        <taxon>Bacteria</taxon>
        <taxon>Pseudomonadati</taxon>
        <taxon>Pseudomonadota</taxon>
        <taxon>Gammaproteobacteria</taxon>
        <taxon>Enterobacterales</taxon>
        <taxon>Enterobacteriaceae</taxon>
        <taxon>Citrobacter</taxon>
    </lineage>
</organism>